<gene>
    <name type="ordered locus">Os05g0310800</name>
    <name type="ordered locus">LOC_Os05g24594</name>
</gene>
<accession>Q0DJA0</accession>
<accession>A0A0P0WKL6</accession>
<keyword id="KW-0963">Cytoplasm</keyword>
<keyword id="KW-0968">Cytoplasmic vesicle</keyword>
<keyword id="KW-0931">ER-Golgi transport</keyword>
<keyword id="KW-0333">Golgi apparatus</keyword>
<keyword id="KW-0472">Membrane</keyword>
<keyword id="KW-0653">Protein transport</keyword>
<keyword id="KW-1185">Reference proteome</keyword>
<keyword id="KW-0813">Transport</keyword>
<evidence type="ECO:0000250" key="1"/>
<evidence type="ECO:0000255" key="2">
    <source>
        <dbReference type="PROSITE-ProRule" id="PRU00404"/>
    </source>
</evidence>
<evidence type="ECO:0000256" key="3">
    <source>
        <dbReference type="SAM" id="MobiDB-lite"/>
    </source>
</evidence>
<evidence type="ECO:0000305" key="4"/>
<protein>
    <recommendedName>
        <fullName>Coatomer subunit delta-1</fullName>
    </recommendedName>
    <alternativeName>
        <fullName>Delta-coat protein 1</fullName>
        <shortName>Delta-COP 1</shortName>
    </alternativeName>
</protein>
<name>COPD1_ORYSJ</name>
<comment type="function">
    <text evidence="1">The coatomer is a cytosolic protein complex that binds to dilysine motifs and reversibly associates with Golgi non-clathrin-coated vesicles, which further mediate biosynthetic protein transport from the ER, via the Golgi up to the trans Golgi network. Coatomer complex is required for budding from Golgi membranes, and is essential for the retrograde Golgi-to-ER transport of dilysine-tagged proteins (By similarity).</text>
</comment>
<comment type="subunit">
    <text evidence="1">Oligomeric complex that consists of at least the alpha, beta, beta', gamma, delta, epsilon and zeta subunits.</text>
</comment>
<comment type="subcellular location">
    <subcellularLocation>
        <location evidence="1">Cytoplasm</location>
    </subcellularLocation>
    <subcellularLocation>
        <location evidence="1">Golgi apparatus membrane</location>
        <topology evidence="1">Peripheral membrane protein</topology>
        <orientation evidence="1">Cytoplasmic side</orientation>
    </subcellularLocation>
    <subcellularLocation>
        <location evidence="1">Cytoplasmic vesicle</location>
        <location evidence="1">COPI-coated vesicle membrane</location>
        <topology evidence="1">Peripheral membrane protein</topology>
        <orientation evidence="1">Cytoplasmic side</orientation>
    </subcellularLocation>
    <text evidence="1">The coatomer is cytoplasmic or polymerized on the cytoplasmic side of the Golgi, as well as on the vesicles/buds originating from it.</text>
</comment>
<comment type="similarity">
    <text evidence="4">Belongs to the adaptor complexes medium subunit family. Delta-COP subfamily.</text>
</comment>
<dbReference type="EMBL" id="AP008211">
    <property type="protein sequence ID" value="BAF17073.1"/>
    <property type="molecule type" value="Genomic_DNA"/>
</dbReference>
<dbReference type="EMBL" id="AP014961">
    <property type="protein sequence ID" value="BAS93284.1"/>
    <property type="molecule type" value="Genomic_DNA"/>
</dbReference>
<dbReference type="EMBL" id="AK068582">
    <property type="status" value="NOT_ANNOTATED_CDS"/>
    <property type="molecule type" value="mRNA"/>
</dbReference>
<dbReference type="RefSeq" id="XP_015639677.1">
    <property type="nucleotide sequence ID" value="XM_015784191.1"/>
</dbReference>
<dbReference type="SMR" id="Q0DJA0"/>
<dbReference type="FunCoup" id="Q0DJA0">
    <property type="interactions" value="4086"/>
</dbReference>
<dbReference type="STRING" id="39947.Q0DJA0"/>
<dbReference type="PaxDb" id="39947-Q0DJA0"/>
<dbReference type="EnsemblPlants" id="Os05t0310800-01">
    <property type="protein sequence ID" value="Os05t0310800-01"/>
    <property type="gene ID" value="Os05g0310800"/>
</dbReference>
<dbReference type="Gramene" id="Os05t0310800-01">
    <property type="protein sequence ID" value="Os05t0310800-01"/>
    <property type="gene ID" value="Os05g0310800"/>
</dbReference>
<dbReference type="KEGG" id="dosa:Os05g0310800"/>
<dbReference type="eggNOG" id="KOG2635">
    <property type="taxonomic scope" value="Eukaryota"/>
</dbReference>
<dbReference type="HOGENOM" id="CLU_019988_3_0_1"/>
<dbReference type="InParanoid" id="Q0DJA0"/>
<dbReference type="OMA" id="VQFRTHP"/>
<dbReference type="OrthoDB" id="10266042at2759"/>
<dbReference type="Proteomes" id="UP000000763">
    <property type="component" value="Chromosome 5"/>
</dbReference>
<dbReference type="Proteomes" id="UP000059680">
    <property type="component" value="Chromosome 5"/>
</dbReference>
<dbReference type="GO" id="GO:0030126">
    <property type="term" value="C:COPI vesicle coat"/>
    <property type="evidence" value="ECO:0000318"/>
    <property type="project" value="GO_Central"/>
</dbReference>
<dbReference type="GO" id="GO:0000139">
    <property type="term" value="C:Golgi membrane"/>
    <property type="evidence" value="ECO:0007669"/>
    <property type="project" value="UniProtKB-SubCell"/>
</dbReference>
<dbReference type="GO" id="GO:0006888">
    <property type="term" value="P:endoplasmic reticulum to Golgi vesicle-mediated transport"/>
    <property type="evidence" value="ECO:0000318"/>
    <property type="project" value="GO_Central"/>
</dbReference>
<dbReference type="GO" id="GO:0051645">
    <property type="term" value="P:Golgi localization"/>
    <property type="evidence" value="ECO:0000318"/>
    <property type="project" value="GO_Central"/>
</dbReference>
<dbReference type="GO" id="GO:0015031">
    <property type="term" value="P:protein transport"/>
    <property type="evidence" value="ECO:0007669"/>
    <property type="project" value="UniProtKB-KW"/>
</dbReference>
<dbReference type="GO" id="GO:0006890">
    <property type="term" value="P:retrograde vesicle-mediated transport, Golgi to endoplasmic reticulum"/>
    <property type="evidence" value="ECO:0000318"/>
    <property type="project" value="GO_Central"/>
</dbReference>
<dbReference type="CDD" id="cd09254">
    <property type="entry name" value="AP_delta-COPI_MHD"/>
    <property type="match status" value="1"/>
</dbReference>
<dbReference type="CDD" id="cd14830">
    <property type="entry name" value="Delta_COP_N"/>
    <property type="match status" value="1"/>
</dbReference>
<dbReference type="FunFam" id="2.60.40.1170:FF:000015">
    <property type="entry name" value="Coatomer subunit delta"/>
    <property type="match status" value="1"/>
</dbReference>
<dbReference type="FunFam" id="3.30.450.60:FF:000003">
    <property type="entry name" value="Coatomer subunit delta"/>
    <property type="match status" value="1"/>
</dbReference>
<dbReference type="Gene3D" id="3.30.450.60">
    <property type="match status" value="1"/>
</dbReference>
<dbReference type="Gene3D" id="2.60.40.1170">
    <property type="entry name" value="Mu homology domain, subdomain B"/>
    <property type="match status" value="2"/>
</dbReference>
<dbReference type="InterPro" id="IPR036168">
    <property type="entry name" value="AP2_Mu_C_sf"/>
</dbReference>
<dbReference type="InterPro" id="IPR027059">
    <property type="entry name" value="Coatomer_dsu"/>
</dbReference>
<dbReference type="InterPro" id="IPR011012">
    <property type="entry name" value="Longin-like_dom_sf"/>
</dbReference>
<dbReference type="InterPro" id="IPR028565">
    <property type="entry name" value="MHD"/>
</dbReference>
<dbReference type="PANTHER" id="PTHR10121">
    <property type="entry name" value="COATOMER SUBUNIT DELTA"/>
    <property type="match status" value="1"/>
</dbReference>
<dbReference type="PANTHER" id="PTHR10121:SF0">
    <property type="entry name" value="COATOMER SUBUNIT DELTA"/>
    <property type="match status" value="1"/>
</dbReference>
<dbReference type="Pfam" id="PF00928">
    <property type="entry name" value="Adap_comp_sub"/>
    <property type="match status" value="1"/>
</dbReference>
<dbReference type="SUPFAM" id="SSF49447">
    <property type="entry name" value="Second domain of Mu2 adaptin subunit (ap50) of ap2 adaptor"/>
    <property type="match status" value="1"/>
</dbReference>
<dbReference type="SUPFAM" id="SSF64356">
    <property type="entry name" value="SNARE-like"/>
    <property type="match status" value="1"/>
</dbReference>
<dbReference type="PROSITE" id="PS51072">
    <property type="entry name" value="MHD"/>
    <property type="match status" value="1"/>
</dbReference>
<reference key="1">
    <citation type="journal article" date="2005" name="Nature">
        <title>The map-based sequence of the rice genome.</title>
        <authorList>
            <consortium name="International rice genome sequencing project (IRGSP)"/>
        </authorList>
    </citation>
    <scope>NUCLEOTIDE SEQUENCE [LARGE SCALE GENOMIC DNA]</scope>
    <source>
        <strain>cv. Nipponbare</strain>
    </source>
</reference>
<reference key="2">
    <citation type="journal article" date="2008" name="Nucleic Acids Res.">
        <title>The rice annotation project database (RAP-DB): 2008 update.</title>
        <authorList>
            <consortium name="The rice annotation project (RAP)"/>
        </authorList>
    </citation>
    <scope>GENOME REANNOTATION</scope>
    <source>
        <strain>cv. Nipponbare</strain>
    </source>
</reference>
<reference key="3">
    <citation type="journal article" date="2013" name="Rice">
        <title>Improvement of the Oryza sativa Nipponbare reference genome using next generation sequence and optical map data.</title>
        <authorList>
            <person name="Kawahara Y."/>
            <person name="de la Bastide M."/>
            <person name="Hamilton J.P."/>
            <person name="Kanamori H."/>
            <person name="McCombie W.R."/>
            <person name="Ouyang S."/>
            <person name="Schwartz D.C."/>
            <person name="Tanaka T."/>
            <person name="Wu J."/>
            <person name="Zhou S."/>
            <person name="Childs K.L."/>
            <person name="Davidson R.M."/>
            <person name="Lin H."/>
            <person name="Quesada-Ocampo L."/>
            <person name="Vaillancourt B."/>
            <person name="Sakai H."/>
            <person name="Lee S.S."/>
            <person name="Kim J."/>
            <person name="Numa H."/>
            <person name="Itoh T."/>
            <person name="Buell C.R."/>
            <person name="Matsumoto T."/>
        </authorList>
    </citation>
    <scope>GENOME REANNOTATION</scope>
    <source>
        <strain>cv. Nipponbare</strain>
    </source>
</reference>
<reference key="4">
    <citation type="journal article" date="2003" name="Science">
        <title>Collection, mapping, and annotation of over 28,000 cDNA clones from japonica rice.</title>
        <authorList>
            <consortium name="The rice full-length cDNA consortium"/>
        </authorList>
    </citation>
    <scope>NUCLEOTIDE SEQUENCE [LARGE SCALE MRNA]</scope>
    <source>
        <strain>cv. Nipponbare</strain>
    </source>
</reference>
<feature type="chain" id="PRO_0000285621" description="Coatomer subunit delta-1">
    <location>
        <begin position="1"/>
        <end position="524"/>
    </location>
</feature>
<feature type="domain" description="MHD" evidence="2">
    <location>
        <begin position="283"/>
        <end position="524"/>
    </location>
</feature>
<feature type="region of interest" description="Disordered" evidence="3">
    <location>
        <begin position="215"/>
        <end position="244"/>
    </location>
</feature>
<feature type="sequence conflict" description="In Ref. 4; AK068582." evidence="4" ref="4">
    <original>S</original>
    <variation>G</variation>
    <location>
        <position position="74"/>
    </location>
</feature>
<proteinExistence type="evidence at transcript level"/>
<sequence>MVVLAASIISKSGKALVSRQFVDMSRIRIEGLLAAFPKLVGTGKQHTYVETENVRYVYQPIEGLYLLLITNKQSNILEDLDTLRLLSKLVPEYSPSLDEEGVCKTAFELIFAFDEAISLGNKENVTVQQVKQYCEMESHEEKAHKLMMQSKINETRDVMKKKASELDKMRMERGKLDKGGYSSISGPRVIEKTFNDMSITGSGFGSGSGLGGLGMDMDSFASKPKGGRPSAAATAPGKGLGMKLGKTQKTNQFLESLKAEGEVILEDVQPSSVQSRASPLPPSDPVTVTIEEKLNVTVKRDGGVNNFDVQGTLALQVLNDADGFIQLQIENQDVPGLSFKTHPNINKDLFNSQQVVGAKDPNRPFPSGQNETPLVKWRIQGMDESSLPLSVNCWPSVSGSETYVNIEYEAAEMFDLHNVVISIPLPALREAPSVRQIDGEWKYDSRNSVLEWSILLIDQSNRSGSMEFVVPPADPSTFFPISIGFSASSTFSDLKVTGIRPLKDGNPPKYSQRARLVAANYQVV</sequence>
<organism>
    <name type="scientific">Oryza sativa subsp. japonica</name>
    <name type="common">Rice</name>
    <dbReference type="NCBI Taxonomy" id="39947"/>
    <lineage>
        <taxon>Eukaryota</taxon>
        <taxon>Viridiplantae</taxon>
        <taxon>Streptophyta</taxon>
        <taxon>Embryophyta</taxon>
        <taxon>Tracheophyta</taxon>
        <taxon>Spermatophyta</taxon>
        <taxon>Magnoliopsida</taxon>
        <taxon>Liliopsida</taxon>
        <taxon>Poales</taxon>
        <taxon>Poaceae</taxon>
        <taxon>BOP clade</taxon>
        <taxon>Oryzoideae</taxon>
        <taxon>Oryzeae</taxon>
        <taxon>Oryzinae</taxon>
        <taxon>Oryza</taxon>
        <taxon>Oryza sativa</taxon>
    </lineage>
</organism>